<gene>
    <name type="ORF">ORF V</name>
</gene>
<feature type="chain" id="PRO_0000222055" description="Enzymatic polyprotein">
    <location>
        <begin position="1"/>
        <end position="659"/>
    </location>
</feature>
<feature type="domain" description="Reverse transcriptase" evidence="2">
    <location>
        <begin position="252"/>
        <end position="436"/>
    </location>
</feature>
<feature type="region of interest" description="Protease" evidence="1">
    <location>
        <begin position="1"/>
        <end position="180"/>
    </location>
</feature>
<feature type="active site">
    <location>
        <position position="34"/>
    </location>
</feature>
<sequence>MSLRNRTNPNSIYVKGILKFPGYQTNLDLHCYVDTGSSLCMASKYVIPEEYWQTAEKPLNIKIANGKIIQLTKVCSKLPIRLGGERFLIPTLFQQESGIDLLLGNNFCQLYSPFIQYTDRIYFHLNKQSVIIGKITKAYQYGVKGFLESMKKKSKVNRPEPINITSNQHLFLEEGGNHVDEMLYEIQISKFSAIEEMLERVSSENPIDPEKSKQWMTATIELIDPKTVVKVKPMSYSPSDREEFDRQIKELLELKVIKPSKSTHMSPAFLVENEAERRRGKKRMVVNYKAMNKATKGDAHNLPNKDELLTLVRGKKIYSSFDCKSGLWQVLLDKESQLLTAFTCPQGHYQWNVVPFGLKQAPSIFPKTYANSHSNQYSKYCCVYVDDILVFSNTGRKEHYIHVLNILRRCEKLGIILSKKKAQLFKEKINFLGLEIDQGTHCPQNHILEHIHKFPDRIEDKKQLQRFLGILTYASDYIPKLASIRKPLQSKLKEDSTWTWNDTDSQYMAKIKKNLKSFPKLYHPEPNDKLVIETDASEEFWGGILKAIHNSHEYICRYASGSFKAAERNYHSNEKELLAVIRVIKKFSIYLTPSRFLIRTDNKNFTHFVNINLKGDRKQGRLVRWQMWLSQYDFDVEHIAGTKNVFADFLQENTLTNYV</sequence>
<accession>P05400</accession>
<evidence type="ECO:0000250" key="1"/>
<evidence type="ECO:0000255" key="2">
    <source>
        <dbReference type="PROSITE-ProRule" id="PRU00405"/>
    </source>
</evidence>
<evidence type="ECO:0000305" key="3"/>
<protein>
    <recommendedName>
        <fullName>Enzymatic polyprotein</fullName>
    </recommendedName>
    <domain>
        <recommendedName>
            <fullName>Aspartic protease</fullName>
            <ecNumber>3.4.23.-</ecNumber>
        </recommendedName>
    </domain>
    <domain>
        <recommendedName>
            <fullName>Endonuclease</fullName>
        </recommendedName>
    </domain>
    <domain>
        <recommendedName>
            <fullName>Reverse transcriptase</fullName>
            <ecNumber>2.7.7.49</ecNumber>
        </recommendedName>
    </domain>
</protein>
<dbReference type="EC" id="3.4.23.-"/>
<dbReference type="EC" id="2.7.7.49"/>
<dbReference type="EMBL" id="X04658">
    <property type="protein sequence ID" value="CAA28360.1"/>
    <property type="molecule type" value="Genomic_DNA"/>
</dbReference>
<dbReference type="PIR" id="S00854">
    <property type="entry name" value="S00854"/>
</dbReference>
<dbReference type="RefSeq" id="NP_612577.1">
    <property type="nucleotide sequence ID" value="NC_003498.1"/>
</dbReference>
<dbReference type="SMR" id="P05400"/>
<dbReference type="MEROPS" id="A03.001"/>
<dbReference type="KEGG" id="vg:935429"/>
<dbReference type="Proteomes" id="UP000008446">
    <property type="component" value="Segment"/>
</dbReference>
<dbReference type="GO" id="GO:0004190">
    <property type="term" value="F:aspartic-type endopeptidase activity"/>
    <property type="evidence" value="ECO:0007669"/>
    <property type="project" value="UniProtKB-KW"/>
</dbReference>
<dbReference type="GO" id="GO:0004519">
    <property type="term" value="F:endonuclease activity"/>
    <property type="evidence" value="ECO:0007669"/>
    <property type="project" value="UniProtKB-KW"/>
</dbReference>
<dbReference type="GO" id="GO:0003964">
    <property type="term" value="F:RNA-directed DNA polymerase activity"/>
    <property type="evidence" value="ECO:0007669"/>
    <property type="project" value="UniProtKB-KW"/>
</dbReference>
<dbReference type="GO" id="GO:0006508">
    <property type="term" value="P:proteolysis"/>
    <property type="evidence" value="ECO:0007669"/>
    <property type="project" value="UniProtKB-KW"/>
</dbReference>
<dbReference type="CDD" id="cd00303">
    <property type="entry name" value="retropepsin_like"/>
    <property type="match status" value="1"/>
</dbReference>
<dbReference type="CDD" id="cd09274">
    <property type="entry name" value="RNase_HI_RT_Ty3"/>
    <property type="match status" value="1"/>
</dbReference>
<dbReference type="CDD" id="cd01647">
    <property type="entry name" value="RT_LTR"/>
    <property type="match status" value="1"/>
</dbReference>
<dbReference type="Gene3D" id="3.30.70.270">
    <property type="match status" value="2"/>
</dbReference>
<dbReference type="Gene3D" id="3.10.10.10">
    <property type="entry name" value="HIV Type 1 Reverse Transcriptase, subunit A, domain 1"/>
    <property type="match status" value="1"/>
</dbReference>
<dbReference type="InterPro" id="IPR043502">
    <property type="entry name" value="DNA/RNA_pol_sf"/>
</dbReference>
<dbReference type="InterPro" id="IPR000588">
    <property type="entry name" value="Pept_A3A"/>
</dbReference>
<dbReference type="InterPro" id="IPR043128">
    <property type="entry name" value="Rev_trsase/Diguanyl_cyclase"/>
</dbReference>
<dbReference type="InterPro" id="IPR000477">
    <property type="entry name" value="RT_dom"/>
</dbReference>
<dbReference type="InterPro" id="IPR041373">
    <property type="entry name" value="RT_RNaseH"/>
</dbReference>
<dbReference type="InterPro" id="IPR051320">
    <property type="entry name" value="Viral_Replic_Matur_Polypro"/>
</dbReference>
<dbReference type="PANTHER" id="PTHR33064">
    <property type="entry name" value="POL PROTEIN"/>
    <property type="match status" value="1"/>
</dbReference>
<dbReference type="PANTHER" id="PTHR33064:SF37">
    <property type="entry name" value="RIBONUCLEASE H"/>
    <property type="match status" value="1"/>
</dbReference>
<dbReference type="Pfam" id="PF02160">
    <property type="entry name" value="Peptidase_A3"/>
    <property type="match status" value="1"/>
</dbReference>
<dbReference type="Pfam" id="PF17917">
    <property type="entry name" value="RT_RNaseH"/>
    <property type="match status" value="1"/>
</dbReference>
<dbReference type="Pfam" id="PF00078">
    <property type="entry name" value="RVT_1"/>
    <property type="match status" value="1"/>
</dbReference>
<dbReference type="PRINTS" id="PR00731">
    <property type="entry name" value="CAULIMOPTASE"/>
</dbReference>
<dbReference type="SUPFAM" id="SSF56672">
    <property type="entry name" value="DNA/RNA polymerases"/>
    <property type="match status" value="1"/>
</dbReference>
<dbReference type="PROSITE" id="PS50878">
    <property type="entry name" value="RT_POL"/>
    <property type="match status" value="1"/>
</dbReference>
<organismHost>
    <name type="scientific">Dianthus caryophyllus</name>
    <name type="common">Carnation</name>
    <name type="synonym">Clove pink</name>
    <dbReference type="NCBI Taxonomy" id="3570"/>
</organismHost>
<name>POL_CERV</name>
<proteinExistence type="inferred from homology"/>
<organism>
    <name type="scientific">Carnation etched ring virus</name>
    <name type="common">CERV</name>
    <dbReference type="NCBI Taxonomy" id="10640"/>
    <lineage>
        <taxon>Viruses</taxon>
        <taxon>Riboviria</taxon>
        <taxon>Pararnavirae</taxon>
        <taxon>Artverviricota</taxon>
        <taxon>Revtraviricetes</taxon>
        <taxon>Ortervirales</taxon>
        <taxon>Caulimoviridae</taxon>
        <taxon>Caulimovirus</taxon>
        <taxon>Caulimovirus incidianthi</taxon>
    </lineage>
</organism>
<reference key="1">
    <citation type="journal article" date="1986" name="EMBO J.">
        <title>The sequence of carnation etched ring virus DNA: comparison with cauliflower mosaic virus and retroviruses.</title>
        <authorList>
            <person name="Hull R."/>
            <person name="Sadler J."/>
            <person name="Longstaff M."/>
        </authorList>
    </citation>
    <scope>NUCLEOTIDE SEQUENCE [GENOMIC DNA]</scope>
</reference>
<comment type="function">
    <text evidence="1">Encodes for at least two polypeptides: protease (PR) and reverse transcriptase (RT). The protease processes the polyprotein in cis. Reverse transcriptase is multifunctional enzyme that converts the viral RNA genome into dsDNA in viral cytoplasmic capsids. This enzyme displays a DNA polymerase activity that can copy either DNA or RNA templates, and a ribonuclease H (RNase H) activity that cleaves the RNA strand of RNA-DNA heteroduplexes in a partially processive 3'- to 5'-endonucleasic mode. Neo-synthesized pregenomic RNA (pgRNA) are encapsidated, and reverse-transcribed inside the nucleocapsid. Partial (+)DNA is synthesized from the (-)DNA template and generates the relaxed circular DNA (RC-DNA) genome. After budding and infection, the RC-DNA migrates in the nucleus, and is converted into a plasmid-like covalently closed circular DNA (cccDNA) (By similarity).</text>
</comment>
<comment type="catalytic activity">
    <reaction evidence="2">
        <text>DNA(n) + a 2'-deoxyribonucleoside 5'-triphosphate = DNA(n+1) + diphosphate</text>
        <dbReference type="Rhea" id="RHEA:22508"/>
        <dbReference type="Rhea" id="RHEA-COMP:17339"/>
        <dbReference type="Rhea" id="RHEA-COMP:17340"/>
        <dbReference type="ChEBI" id="CHEBI:33019"/>
        <dbReference type="ChEBI" id="CHEBI:61560"/>
        <dbReference type="ChEBI" id="CHEBI:173112"/>
        <dbReference type="EC" id="2.7.7.49"/>
    </reaction>
</comment>
<comment type="domain">
    <text evidence="1">The polymerase/reverse transcriptase (RT) and ribonuclease H (RH) domains are structured in five subdomains: finger, palm, thumb, connection and RNase H. Within the palm subdomain, the 'primer grip' region is thought to be involved in the positioning of the primer terminus for accommodating the incoming nucleotide. The RH domain stabilizes the association of RT with primer-template (By similarity).</text>
</comment>
<comment type="similarity">
    <text evidence="3">Belongs to the caulimoviridae enzymatic polyprotein family.</text>
</comment>
<keyword id="KW-0064">Aspartyl protease</keyword>
<keyword id="KW-0255">Endonuclease</keyword>
<keyword id="KW-0378">Hydrolase</keyword>
<keyword id="KW-0540">Nuclease</keyword>
<keyword id="KW-0548">Nucleotidyltransferase</keyword>
<keyword id="KW-0645">Protease</keyword>
<keyword id="KW-1185">Reference proteome</keyword>
<keyword id="KW-0695">RNA-directed DNA polymerase</keyword>
<keyword id="KW-0808">Transferase</keyword>